<keyword id="KW-0687">Ribonucleoprotein</keyword>
<keyword id="KW-0689">Ribosomal protein</keyword>
<keyword id="KW-0694">RNA-binding</keyword>
<keyword id="KW-0699">rRNA-binding</keyword>
<keyword id="KW-0820">tRNA-binding</keyword>
<proteinExistence type="inferred from homology"/>
<evidence type="ECO:0000255" key="1">
    <source>
        <dbReference type="HAMAP-Rule" id="MF_01333"/>
    </source>
</evidence>
<evidence type="ECO:0000305" key="2"/>
<comment type="function">
    <text evidence="1">This is one of the proteins that bind and probably mediate the attachment of the 5S RNA into the large ribosomal subunit, where it forms part of the central protuberance. In the 70S ribosome it contacts protein S13 of the 30S subunit (bridge B1b), connecting the 2 subunits; this bridge is implicated in subunit movement. Contacts the P site tRNA; the 5S rRNA and some of its associated proteins might help stabilize positioning of ribosome-bound tRNAs.</text>
</comment>
<comment type="subunit">
    <text evidence="1">Part of the 50S ribosomal subunit; part of the 5S rRNA/L5/L18/L25 subcomplex. Contacts the 5S rRNA and the P site tRNA. Forms a bridge to the 30S subunit in the 70S ribosome.</text>
</comment>
<comment type="similarity">
    <text evidence="1">Belongs to the universal ribosomal protein uL5 family.</text>
</comment>
<feature type="chain" id="PRO_1000142360" description="Large ribosomal subunit protein uL5">
    <location>
        <begin position="1"/>
        <end position="179"/>
    </location>
</feature>
<organism>
    <name type="scientific">Bordetella petrii (strain ATCC BAA-461 / DSM 12804 / CCUG 43448)</name>
    <dbReference type="NCBI Taxonomy" id="340100"/>
    <lineage>
        <taxon>Bacteria</taxon>
        <taxon>Pseudomonadati</taxon>
        <taxon>Pseudomonadota</taxon>
        <taxon>Betaproteobacteria</taxon>
        <taxon>Burkholderiales</taxon>
        <taxon>Alcaligenaceae</taxon>
        <taxon>Bordetella</taxon>
    </lineage>
</organism>
<dbReference type="EMBL" id="AM902716">
    <property type="protein sequence ID" value="CAP45290.1"/>
    <property type="molecule type" value="Genomic_DNA"/>
</dbReference>
<dbReference type="SMR" id="A9IHT8"/>
<dbReference type="STRING" id="94624.Bpet4938"/>
<dbReference type="KEGG" id="bpt:Bpet4938"/>
<dbReference type="eggNOG" id="COG0094">
    <property type="taxonomic scope" value="Bacteria"/>
</dbReference>
<dbReference type="Proteomes" id="UP000001225">
    <property type="component" value="Chromosome"/>
</dbReference>
<dbReference type="GO" id="GO:1990904">
    <property type="term" value="C:ribonucleoprotein complex"/>
    <property type="evidence" value="ECO:0007669"/>
    <property type="project" value="UniProtKB-KW"/>
</dbReference>
<dbReference type="GO" id="GO:0005840">
    <property type="term" value="C:ribosome"/>
    <property type="evidence" value="ECO:0007669"/>
    <property type="project" value="UniProtKB-KW"/>
</dbReference>
<dbReference type="GO" id="GO:0019843">
    <property type="term" value="F:rRNA binding"/>
    <property type="evidence" value="ECO:0007669"/>
    <property type="project" value="UniProtKB-UniRule"/>
</dbReference>
<dbReference type="GO" id="GO:0003735">
    <property type="term" value="F:structural constituent of ribosome"/>
    <property type="evidence" value="ECO:0007669"/>
    <property type="project" value="InterPro"/>
</dbReference>
<dbReference type="GO" id="GO:0000049">
    <property type="term" value="F:tRNA binding"/>
    <property type="evidence" value="ECO:0007669"/>
    <property type="project" value="UniProtKB-UniRule"/>
</dbReference>
<dbReference type="GO" id="GO:0006412">
    <property type="term" value="P:translation"/>
    <property type="evidence" value="ECO:0007669"/>
    <property type="project" value="UniProtKB-UniRule"/>
</dbReference>
<dbReference type="FunFam" id="3.30.1440.10:FF:000001">
    <property type="entry name" value="50S ribosomal protein L5"/>
    <property type="match status" value="1"/>
</dbReference>
<dbReference type="Gene3D" id="3.30.1440.10">
    <property type="match status" value="1"/>
</dbReference>
<dbReference type="HAMAP" id="MF_01333_B">
    <property type="entry name" value="Ribosomal_uL5_B"/>
    <property type="match status" value="1"/>
</dbReference>
<dbReference type="InterPro" id="IPR002132">
    <property type="entry name" value="Ribosomal_uL5"/>
</dbReference>
<dbReference type="InterPro" id="IPR020930">
    <property type="entry name" value="Ribosomal_uL5_bac-type"/>
</dbReference>
<dbReference type="InterPro" id="IPR031309">
    <property type="entry name" value="Ribosomal_uL5_C"/>
</dbReference>
<dbReference type="InterPro" id="IPR020929">
    <property type="entry name" value="Ribosomal_uL5_CS"/>
</dbReference>
<dbReference type="InterPro" id="IPR022803">
    <property type="entry name" value="Ribosomal_uL5_dom_sf"/>
</dbReference>
<dbReference type="InterPro" id="IPR031310">
    <property type="entry name" value="Ribosomal_uL5_N"/>
</dbReference>
<dbReference type="NCBIfam" id="NF000585">
    <property type="entry name" value="PRK00010.1"/>
    <property type="match status" value="1"/>
</dbReference>
<dbReference type="PANTHER" id="PTHR11994">
    <property type="entry name" value="60S RIBOSOMAL PROTEIN L11-RELATED"/>
    <property type="match status" value="1"/>
</dbReference>
<dbReference type="Pfam" id="PF00281">
    <property type="entry name" value="Ribosomal_L5"/>
    <property type="match status" value="1"/>
</dbReference>
<dbReference type="Pfam" id="PF00673">
    <property type="entry name" value="Ribosomal_L5_C"/>
    <property type="match status" value="1"/>
</dbReference>
<dbReference type="PIRSF" id="PIRSF002161">
    <property type="entry name" value="Ribosomal_L5"/>
    <property type="match status" value="1"/>
</dbReference>
<dbReference type="SUPFAM" id="SSF55282">
    <property type="entry name" value="RL5-like"/>
    <property type="match status" value="1"/>
</dbReference>
<dbReference type="PROSITE" id="PS00358">
    <property type="entry name" value="RIBOSOMAL_L5"/>
    <property type="match status" value="1"/>
</dbReference>
<name>RL5_BORPD</name>
<protein>
    <recommendedName>
        <fullName evidence="1">Large ribosomal subunit protein uL5</fullName>
    </recommendedName>
    <alternativeName>
        <fullName evidence="2">50S ribosomal protein L5</fullName>
    </alternativeName>
</protein>
<accession>A9IHT8</accession>
<reference key="1">
    <citation type="journal article" date="2008" name="BMC Genomics">
        <title>The missing link: Bordetella petrii is endowed with both the metabolic versatility of environmental bacteria and virulence traits of pathogenic Bordetellae.</title>
        <authorList>
            <person name="Gross R."/>
            <person name="Guzman C.A."/>
            <person name="Sebaihia M."/>
            <person name="Martin dos Santos V.A.P."/>
            <person name="Pieper D.H."/>
            <person name="Koebnik R."/>
            <person name="Lechner M."/>
            <person name="Bartels D."/>
            <person name="Buhrmester J."/>
            <person name="Choudhuri J.V."/>
            <person name="Ebensen T."/>
            <person name="Gaigalat L."/>
            <person name="Herrmann S."/>
            <person name="Khachane A.N."/>
            <person name="Larisch C."/>
            <person name="Link S."/>
            <person name="Linke B."/>
            <person name="Meyer F."/>
            <person name="Mormann S."/>
            <person name="Nakunst D."/>
            <person name="Rueckert C."/>
            <person name="Schneiker-Bekel S."/>
            <person name="Schulze K."/>
            <person name="Voerholter F.-J."/>
            <person name="Yevsa T."/>
            <person name="Engle J.T."/>
            <person name="Goldman W.E."/>
            <person name="Puehler A."/>
            <person name="Goebel U.B."/>
            <person name="Goesmann A."/>
            <person name="Bloecker H."/>
            <person name="Kaiser O."/>
            <person name="Martinez-Arias R."/>
        </authorList>
    </citation>
    <scope>NUCLEOTIDE SEQUENCE [LARGE SCALE GENOMIC DNA]</scope>
    <source>
        <strain>ATCC BAA-461 / DSM 12804 / CCUG 43448</strain>
    </source>
</reference>
<gene>
    <name evidence="1" type="primary">rplE</name>
    <name type="ordered locus">Bpet4938</name>
</gene>
<sequence>MSRLQDFYKSKVAPDLQAKFGYKSTMEVPRITKVTLNMGVSEAVADKKVIEHAVSDLTKIAGQKPVVTKTRKAIAGFKIRENYPIGCMVTLRGQRMYEFLDRLVAVALPRVRDFRGISGRAFDGRGNYNIGVKEQIIFPEIEYDKIDALRGLNISITTTAKTDDEAKALLTAFSFPFRN</sequence>